<comment type="function">
    <text evidence="8 9">Seed storage protein.</text>
</comment>
<comment type="subunit">
    <text evidence="3 4">Homotrimer.</text>
</comment>
<comment type="tissue specificity">
    <text evidence="3 4">Expressed in seed (at protein level) (PubMed:27128197). Expressed in seed (PubMed:25084379).</text>
</comment>
<comment type="developmental stage">
    <text evidence="3">Expressed during nut development. Expressed in gel stage of the seed kernel.</text>
</comment>
<comment type="allergen">
    <text evidence="4">Causes an allergic reaction in human. Binds to IgE of patients allergic to pecan nuts and walnuts. Binds to IgE in 30% of the 27 patients tested by Western blot and in 24% of the 25 patients tested by double-blind, placebo-controlled oral food challenge.</text>
</comment>
<comment type="similarity">
    <text evidence="7">Belongs to the 7S seed storage protein family.</text>
</comment>
<accession>B3STU4</accession>
<reference evidence="10" key="1">
    <citation type="submission" date="2007-06" db="EMBL/GenBank/DDBJ databases">
        <title>Characterization of 7S vicilin-like protein from Carya illinoinensis (Pecan).</title>
        <authorList>
            <person name="Sharma G.M."/>
            <person name="Roux K.H."/>
            <person name="Sathe S.K."/>
        </authorList>
    </citation>
    <scope>NUCLEOTIDE SEQUENCE [MRNA]</scope>
</reference>
<reference evidence="13" key="2">
    <citation type="journal article" date="2016" name="J. Agric. Food Chem.">
        <title>Identification and Characterization of a New Pecan [Carya illinoinensis (Wangenh.) K. Koch] Allergen, Car i 2.</title>
        <authorList>
            <person name="Zhang Y."/>
            <person name="Lee B."/>
            <person name="Du W.X."/>
            <person name="Lyu S.C."/>
            <person name="Nadeau K.C."/>
            <person name="Grauke L.J."/>
            <person name="Zhang Y."/>
            <person name="Wang S."/>
            <person name="Fan Y."/>
            <person name="Yi J."/>
            <person name="McHugh T.H."/>
        </authorList>
    </citation>
    <scope>PROTEIN SEQUENCE OF 312-316</scope>
    <scope>X-RAY CRYSTALLOGRAPHY (2.65 ANGSTROMS) OF 369-792 IN COMPLEX WITH COPPER</scope>
    <scope>SUBUNIT</scope>
    <scope>TISSUE SPECIFICITY</scope>
    <scope>ALLERGEN</scope>
    <scope>PROTEOLYTIC CLEAVAGE</scope>
</reference>
<reference key="3">
    <citation type="journal article" date="2014" name="Acta Crystallogr. F Struct. Biol. Commun.">
        <title>Expression, purification and crystallization of pecan (Carya illinoinensis) vicilin.</title>
        <authorList>
            <person name="Lee B."/>
            <person name="Zhang R."/>
            <person name="Du W.X."/>
            <person name="Grauke L.J."/>
            <person name="McHugh T.H."/>
            <person name="Zhang Y.Z."/>
        </authorList>
    </citation>
    <scope>CRYSTALLIZATION</scope>
    <scope>TISSUE SPECIFICITY</scope>
    <scope>DEVELOPMENTAL STAGE</scope>
    <scope>SUBUNIT</scope>
</reference>
<name>VCL_CARIL</name>
<feature type="signal peptide" evidence="1">
    <location>
        <begin position="1"/>
        <end position="26"/>
    </location>
</feature>
<feature type="chain" id="PRO_5010824428" description="Vicilin Car i 2.0101" evidence="1">
    <location>
        <begin position="27"/>
        <end position="792"/>
    </location>
</feature>
<feature type="domain" description="Cupin type-1 1" evidence="1">
    <location>
        <begin position="384"/>
        <end position="537"/>
    </location>
</feature>
<feature type="domain" description="Cupin type-1 2" evidence="1">
    <location>
        <begin position="582"/>
        <end position="754"/>
    </location>
</feature>
<feature type="region of interest" description="Disordered" evidence="2">
    <location>
        <begin position="132"/>
        <end position="153"/>
    </location>
</feature>
<feature type="region of interest" description="Disordered" evidence="2">
    <location>
        <begin position="182"/>
        <end position="217"/>
    </location>
</feature>
<feature type="region of interest" description="Disordered" evidence="2">
    <location>
        <begin position="240"/>
        <end position="272"/>
    </location>
</feature>
<feature type="region of interest" description="Disordered" evidence="2">
    <location>
        <begin position="302"/>
        <end position="325"/>
    </location>
</feature>
<feature type="region of interest" description="Disordered" evidence="2">
    <location>
        <begin position="350"/>
        <end position="394"/>
    </location>
</feature>
<feature type="coiled-coil region" evidence="1">
    <location>
        <begin position="727"/>
        <end position="754"/>
    </location>
</feature>
<feature type="compositionally biased region" description="Basic and acidic residues" evidence="2">
    <location>
        <begin position="182"/>
        <end position="200"/>
    </location>
</feature>
<feature type="compositionally biased region" description="Basic and acidic residues" evidence="2">
    <location>
        <begin position="207"/>
        <end position="217"/>
    </location>
</feature>
<feature type="compositionally biased region" description="Basic and acidic residues" evidence="2">
    <location>
        <begin position="302"/>
        <end position="314"/>
    </location>
</feature>
<feature type="compositionally biased region" description="Low complexity" evidence="2">
    <location>
        <begin position="315"/>
        <end position="325"/>
    </location>
</feature>
<feature type="compositionally biased region" description="Basic and acidic residues" evidence="2">
    <location>
        <begin position="350"/>
        <end position="375"/>
    </location>
</feature>
<feature type="binding site" evidence="4 13">
    <location>
        <position position="379"/>
    </location>
    <ligand>
        <name>Cu cation</name>
        <dbReference type="ChEBI" id="CHEBI:23378"/>
    </ligand>
</feature>
<feature type="binding site" evidence="4 13">
    <location>
        <position position="652"/>
    </location>
    <ligand>
        <name>Cu cation</name>
        <dbReference type="ChEBI" id="CHEBI:23378"/>
    </ligand>
</feature>
<feature type="binding site" evidence="4 13">
    <location>
        <position position="654"/>
    </location>
    <ligand>
        <name>Cu cation</name>
        <dbReference type="ChEBI" id="CHEBI:23378"/>
    </ligand>
</feature>
<feature type="binding site" evidence="4 13">
    <location>
        <position position="698"/>
    </location>
    <ligand>
        <name>Cu cation</name>
        <dbReference type="ChEBI" id="CHEBI:23378"/>
    </ligand>
</feature>
<feature type="site" description="Cleavage" evidence="4">
    <location>
        <begin position="311"/>
        <end position="312"/>
    </location>
</feature>
<feature type="helix" evidence="14">
    <location>
        <begin position="383"/>
        <end position="385"/>
    </location>
</feature>
<feature type="strand" evidence="14">
    <location>
        <begin position="386"/>
        <end position="388"/>
    </location>
</feature>
<feature type="strand" evidence="14">
    <location>
        <begin position="393"/>
        <end position="399"/>
    </location>
</feature>
<feature type="helix" evidence="14">
    <location>
        <begin position="411"/>
        <end position="413"/>
    </location>
</feature>
<feature type="strand" evidence="14">
    <location>
        <begin position="417"/>
        <end position="423"/>
    </location>
</feature>
<feature type="strand" evidence="14">
    <location>
        <begin position="425"/>
        <end position="445"/>
    </location>
</feature>
<feature type="strand" evidence="14">
    <location>
        <begin position="447"/>
        <end position="453"/>
    </location>
</feature>
<feature type="strand" evidence="14">
    <location>
        <begin position="456"/>
        <end position="462"/>
    </location>
</feature>
<feature type="strand" evidence="14">
    <location>
        <begin position="466"/>
        <end position="470"/>
    </location>
</feature>
<feature type="strand" evidence="14">
    <location>
        <begin position="475"/>
        <end position="480"/>
    </location>
</feature>
<feature type="strand" evidence="14">
    <location>
        <begin position="487"/>
        <end position="498"/>
    </location>
</feature>
<feature type="strand" evidence="14">
    <location>
        <begin position="504"/>
        <end position="508"/>
    </location>
</feature>
<feature type="helix" evidence="14">
    <location>
        <begin position="516"/>
        <end position="519"/>
    </location>
</feature>
<feature type="helix" evidence="14">
    <location>
        <begin position="522"/>
        <end position="529"/>
    </location>
</feature>
<feature type="helix" evidence="14">
    <location>
        <begin position="533"/>
        <end position="541"/>
    </location>
</feature>
<feature type="turn" evidence="14">
    <location>
        <begin position="542"/>
        <end position="545"/>
    </location>
</feature>
<feature type="strand" evidence="14">
    <location>
        <begin position="548"/>
        <end position="552"/>
    </location>
</feature>
<feature type="helix" evidence="14">
    <location>
        <begin position="555"/>
        <end position="560"/>
    </location>
</feature>
<feature type="helix" evidence="14">
    <location>
        <begin position="584"/>
        <end position="586"/>
    </location>
</feature>
<feature type="strand" evidence="14">
    <location>
        <begin position="588"/>
        <end position="593"/>
    </location>
</feature>
<feature type="strand" evidence="14">
    <location>
        <begin position="596"/>
        <end position="601"/>
    </location>
</feature>
<feature type="turn" evidence="14">
    <location>
        <begin position="603"/>
        <end position="605"/>
    </location>
</feature>
<feature type="helix" evidence="14">
    <location>
        <begin position="607"/>
        <end position="609"/>
    </location>
</feature>
<feature type="turn" evidence="14">
    <location>
        <begin position="610"/>
        <end position="613"/>
    </location>
</feature>
<feature type="strand" evidence="14">
    <location>
        <begin position="614"/>
        <end position="621"/>
    </location>
</feature>
<feature type="strand" evidence="14">
    <location>
        <begin position="625"/>
        <end position="634"/>
    </location>
</feature>
<feature type="strand" evidence="14">
    <location>
        <begin position="636"/>
        <end position="643"/>
    </location>
</feature>
<feature type="strand" evidence="14">
    <location>
        <begin position="646"/>
        <end position="652"/>
    </location>
</feature>
<feature type="strand" evidence="14">
    <location>
        <begin position="680"/>
        <end position="686"/>
    </location>
</feature>
<feature type="strand" evidence="14">
    <location>
        <begin position="691"/>
        <end position="694"/>
    </location>
</feature>
<feature type="strand" evidence="14">
    <location>
        <begin position="700"/>
        <end position="704"/>
    </location>
</feature>
<feature type="strand" evidence="14">
    <location>
        <begin position="706"/>
        <end position="708"/>
    </location>
</feature>
<feature type="strand" evidence="14">
    <location>
        <begin position="710"/>
        <end position="717"/>
    </location>
</feature>
<feature type="strand" evidence="14">
    <location>
        <begin position="724"/>
        <end position="729"/>
    </location>
</feature>
<feature type="helix" evidence="14">
    <location>
        <begin position="733"/>
        <end position="736"/>
    </location>
</feature>
<feature type="helix" evidence="14">
    <location>
        <begin position="739"/>
        <end position="746"/>
    </location>
</feature>
<feature type="helix" evidence="14">
    <location>
        <begin position="750"/>
        <end position="757"/>
    </location>
</feature>
<feature type="strand" evidence="14">
    <location>
        <begin position="764"/>
        <end position="769"/>
    </location>
</feature>
<protein>
    <recommendedName>
        <fullName evidence="7">Vicilin Car i 2.0101</fullName>
    </recommendedName>
    <alternativeName>
        <fullName evidence="5 6">7S globulin</fullName>
    </alternativeName>
    <alternativeName>
        <fullName evidence="5 6">7S seed storage protein</fullName>
    </alternativeName>
    <alternativeName>
        <fullName evidence="6">Allergen Car i 2</fullName>
    </alternativeName>
    <alternativeName>
        <fullName evidence="6">Cariv</fullName>
    </alternativeName>
    <allergenName evidence="7">Car i 2.0101</allergenName>
</protein>
<sequence>MVTKAKIPLFLFLSALFLALVCSSLALETEDLSNELNPHHDPESHRWEFQQCQERCQHEERGQRQAQQCQRRCEEQLREREREREREEIVDPREPRKQYEQCRETCEKQDPRQQPQCERRCERQFQEQQERERRERRRGRDDDDKENPRDPREQYRQCEEHCRRQGQGQRQQQQCQSRCEERFEEEQRRQEERERRRGRDNDDEENPRDPREQYRQCQEHCRRQGQGQRQQQQCQSRCEERLEEEQRKQEERERRRGRDEDDQNPRDPEQRYEQCQQQCERQRRGQEQQLCRRRCEQQRQQEERERQRGRDRQDPQQQYHRCQRRCQTQEQSPERQRQCQQRCERQYKEQQGREWGPDQASPRRESRGREEEQQRHNPYYFHSQGLRSRHESGEGEVKYLERFTERTELLRGIENYRVVILEANPNTFVLPYHKDAESVIVVTRGRATLTFVSQERRESFNLEYGDVIRVPAGATEYVINQDSNERLEMVKLLQPVNNPGQFREYYAAGAQSTESYLRVFSNDILVAALNTPRDRLERFFDQQEQREGVIIRASQEKLRALSQHAMSAGQRPWGRRSSGGPISLKSQRSSYSNQFGQFFEACPEEHRQLQEMDVLVNYAEIKRGAMMVPHYNSKATVVVYVVEGTGRFEMACPHDVSSQSYEYKGRREQEEEESSTGQFQKVTARLARGDIFVIPAGHPIAITASQNENLRLVGFGINGKNNQRNFLAGQNNIINQLEREAKELSFNMPREEIEEIFERQVESYFVPMERQSRRGQGRDHPLASILDFAGFF</sequence>
<dbReference type="EMBL" id="EF689893">
    <property type="protein sequence ID" value="ABV49590.1"/>
    <property type="molecule type" value="mRNA"/>
</dbReference>
<dbReference type="EMBL" id="EF689894">
    <property type="protein sequence ID" value="ABV49591.1"/>
    <property type="molecule type" value="mRNA"/>
</dbReference>
<dbReference type="EMBL" id="EF689895">
    <property type="protein sequence ID" value="ABV49592.1"/>
    <property type="molecule type" value="mRNA"/>
</dbReference>
<dbReference type="PDB" id="5E1R">
    <property type="method" value="X-ray"/>
    <property type="resolution" value="2.65 A"/>
    <property type="chains" value="A/B/C/D/E/F=369-792"/>
</dbReference>
<dbReference type="PDBsum" id="5E1R"/>
<dbReference type="SMR" id="B3STU4"/>
<dbReference type="Allergome" id="11949">
    <property type="allergen name" value="Car i 2.0101"/>
</dbReference>
<dbReference type="Allergome" id="9549">
    <property type="allergen name" value="Car i 2"/>
</dbReference>
<dbReference type="OrthoDB" id="1912756at2759"/>
<dbReference type="GO" id="GO:0005507">
    <property type="term" value="F:copper ion binding"/>
    <property type="evidence" value="ECO:0000314"/>
    <property type="project" value="UniProtKB"/>
</dbReference>
<dbReference type="GO" id="GO:0045735">
    <property type="term" value="F:nutrient reservoir activity"/>
    <property type="evidence" value="ECO:0000305"/>
    <property type="project" value="UniProtKB"/>
</dbReference>
<dbReference type="GO" id="GO:0070207">
    <property type="term" value="P:protein homotrimerization"/>
    <property type="evidence" value="ECO:0000314"/>
    <property type="project" value="UniProtKB"/>
</dbReference>
<dbReference type="GO" id="GO:0048316">
    <property type="term" value="P:seed development"/>
    <property type="evidence" value="ECO:0000270"/>
    <property type="project" value="UniProtKB"/>
</dbReference>
<dbReference type="GO" id="GO:0010431">
    <property type="term" value="P:seed maturation"/>
    <property type="evidence" value="ECO:0000270"/>
    <property type="project" value="UniProtKB"/>
</dbReference>
<dbReference type="CDD" id="cd02245">
    <property type="entry name" value="cupin_7S_vicilin-like_C"/>
    <property type="match status" value="1"/>
</dbReference>
<dbReference type="CDD" id="cd02244">
    <property type="entry name" value="cupin_7S_vicilin-like_N"/>
    <property type="match status" value="1"/>
</dbReference>
<dbReference type="Gene3D" id="6.10.250.890">
    <property type="match status" value="4"/>
</dbReference>
<dbReference type="Gene3D" id="2.60.120.10">
    <property type="entry name" value="Jelly Rolls"/>
    <property type="match status" value="2"/>
</dbReference>
<dbReference type="InterPro" id="IPR006045">
    <property type="entry name" value="Cupin_1"/>
</dbReference>
<dbReference type="InterPro" id="IPR014710">
    <property type="entry name" value="RmlC-like_jellyroll"/>
</dbReference>
<dbReference type="InterPro" id="IPR011051">
    <property type="entry name" value="RmlC_Cupin_sf"/>
</dbReference>
<dbReference type="InterPro" id="IPR050253">
    <property type="entry name" value="Seed_Storage-Functional"/>
</dbReference>
<dbReference type="InterPro" id="IPR006792">
    <property type="entry name" value="Vicilin_N"/>
</dbReference>
<dbReference type="PANTHER" id="PTHR31189">
    <property type="entry name" value="OS03G0336100 PROTEIN-RELATED"/>
    <property type="match status" value="1"/>
</dbReference>
<dbReference type="PANTHER" id="PTHR31189:SF41">
    <property type="entry name" value="VICILIN C72"/>
    <property type="match status" value="1"/>
</dbReference>
<dbReference type="Pfam" id="PF00190">
    <property type="entry name" value="Cupin_1"/>
    <property type="match status" value="2"/>
</dbReference>
<dbReference type="Pfam" id="PF04702">
    <property type="entry name" value="Vicilin_N"/>
    <property type="match status" value="2"/>
</dbReference>
<dbReference type="SMART" id="SM00835">
    <property type="entry name" value="Cupin_1"/>
    <property type="match status" value="2"/>
</dbReference>
<dbReference type="SUPFAM" id="SSF51182">
    <property type="entry name" value="RmlC-like cupins"/>
    <property type="match status" value="2"/>
</dbReference>
<gene>
    <name evidence="10" type="primary">pec2a1a</name>
    <name evidence="11" type="synonym">pec3a1a</name>
    <name evidence="12" type="synonym">pec4a1a</name>
</gene>
<evidence type="ECO:0000255" key="1"/>
<evidence type="ECO:0000256" key="2">
    <source>
        <dbReference type="SAM" id="MobiDB-lite"/>
    </source>
</evidence>
<evidence type="ECO:0000269" key="3">
    <source>
    </source>
</evidence>
<evidence type="ECO:0000269" key="4">
    <source>
    </source>
</evidence>
<evidence type="ECO:0000303" key="5">
    <source>
    </source>
</evidence>
<evidence type="ECO:0000303" key="6">
    <source>
    </source>
</evidence>
<evidence type="ECO:0000305" key="7"/>
<evidence type="ECO:0000305" key="8">
    <source>
    </source>
</evidence>
<evidence type="ECO:0000305" key="9">
    <source>
    </source>
</evidence>
<evidence type="ECO:0000312" key="10">
    <source>
        <dbReference type="EMBL" id="ABV49590.1"/>
    </source>
</evidence>
<evidence type="ECO:0000312" key="11">
    <source>
        <dbReference type="EMBL" id="ABV49591.1"/>
    </source>
</evidence>
<evidence type="ECO:0000312" key="12">
    <source>
        <dbReference type="EMBL" id="ABV49592.1"/>
    </source>
</evidence>
<evidence type="ECO:0007744" key="13">
    <source>
        <dbReference type="PDB" id="5E1R"/>
    </source>
</evidence>
<evidence type="ECO:0007829" key="14">
    <source>
        <dbReference type="PDB" id="5E1R"/>
    </source>
</evidence>
<keyword id="KW-0002">3D-structure</keyword>
<keyword id="KW-0020">Allergen</keyword>
<keyword id="KW-0175">Coiled coil</keyword>
<keyword id="KW-0186">Copper</keyword>
<keyword id="KW-0903">Direct protein sequencing</keyword>
<keyword id="KW-0479">Metal-binding</keyword>
<keyword id="KW-0708">Seed storage protein</keyword>
<keyword id="KW-0732">Signal</keyword>
<keyword id="KW-0758">Storage protein</keyword>
<proteinExistence type="evidence at protein level"/>
<organism evidence="10">
    <name type="scientific">Carya illinoinensis</name>
    <name type="common">Pecan</name>
    <dbReference type="NCBI Taxonomy" id="32201"/>
    <lineage>
        <taxon>Eukaryota</taxon>
        <taxon>Viridiplantae</taxon>
        <taxon>Streptophyta</taxon>
        <taxon>Embryophyta</taxon>
        <taxon>Tracheophyta</taxon>
        <taxon>Spermatophyta</taxon>
        <taxon>Magnoliopsida</taxon>
        <taxon>eudicotyledons</taxon>
        <taxon>Gunneridae</taxon>
        <taxon>Pentapetalae</taxon>
        <taxon>rosids</taxon>
        <taxon>fabids</taxon>
        <taxon>Fagales</taxon>
        <taxon>Juglandaceae</taxon>
        <taxon>Carya</taxon>
    </lineage>
</organism>